<keyword id="KW-0007">Acetylation</keyword>
<keyword id="KW-0963">Cytoplasm</keyword>
<keyword id="KW-0206">Cytoskeleton</keyword>
<keyword id="KW-0217">Developmental protein</keyword>
<keyword id="KW-0488">Methylation</keyword>
<keyword id="KW-0597">Phosphoprotein</keyword>
<keyword id="KW-1185">Reference proteome</keyword>
<keyword id="KW-0678">Repressor</keyword>
<keyword id="KW-0687">Ribonucleoprotein</keyword>
<keyword id="KW-0810">Translation regulation</keyword>
<protein>
    <recommendedName>
        <fullName>Protein LSM14 homolog A</fullName>
    </recommendedName>
    <alternativeName>
        <fullName>Protein FAM61A</fullName>
    </alternativeName>
    <alternativeName>
        <fullName>RNA-associated protein 55A</fullName>
    </alternativeName>
</protein>
<organism>
    <name type="scientific">Bos taurus</name>
    <name type="common">Bovine</name>
    <dbReference type="NCBI Taxonomy" id="9913"/>
    <lineage>
        <taxon>Eukaryota</taxon>
        <taxon>Metazoa</taxon>
        <taxon>Chordata</taxon>
        <taxon>Craniata</taxon>
        <taxon>Vertebrata</taxon>
        <taxon>Euteleostomi</taxon>
        <taxon>Mammalia</taxon>
        <taxon>Eutheria</taxon>
        <taxon>Laurasiatheria</taxon>
        <taxon>Artiodactyla</taxon>
        <taxon>Ruminantia</taxon>
        <taxon>Pecora</taxon>
        <taxon>Bovidae</taxon>
        <taxon>Bovinae</taxon>
        <taxon>Bos</taxon>
    </lineage>
</organism>
<evidence type="ECO:0000250" key="1">
    <source>
        <dbReference type="UniProtKB" id="A0A8M2"/>
    </source>
</evidence>
<evidence type="ECO:0000250" key="2">
    <source>
        <dbReference type="UniProtKB" id="Q8K2F8"/>
    </source>
</evidence>
<evidence type="ECO:0000250" key="3">
    <source>
        <dbReference type="UniProtKB" id="Q8ND56"/>
    </source>
</evidence>
<evidence type="ECO:0000255" key="4">
    <source>
        <dbReference type="PROSITE-ProRule" id="PRU00845"/>
    </source>
</evidence>
<evidence type="ECO:0000255" key="5">
    <source>
        <dbReference type="PROSITE-ProRule" id="PRU01346"/>
    </source>
</evidence>
<evidence type="ECO:0000256" key="6">
    <source>
        <dbReference type="SAM" id="MobiDB-lite"/>
    </source>
</evidence>
<evidence type="ECO:0000305" key="7"/>
<feature type="initiator methionine" description="Removed" evidence="3">
    <location>
        <position position="1"/>
    </location>
</feature>
<feature type="chain" id="PRO_0000259421" description="Protein LSM14 homolog A">
    <location>
        <begin position="2"/>
        <end position="463"/>
    </location>
</feature>
<feature type="domain" description="Sm" evidence="5">
    <location>
        <begin position="1"/>
        <end position="81"/>
    </location>
</feature>
<feature type="domain" description="DFDF" evidence="4">
    <location>
        <begin position="284"/>
        <end position="320"/>
    </location>
</feature>
<feature type="region of interest" description="Disordered" evidence="6">
    <location>
        <begin position="172"/>
        <end position="288"/>
    </location>
</feature>
<feature type="region of interest" description="Disordered" evidence="6">
    <location>
        <begin position="322"/>
        <end position="359"/>
    </location>
</feature>
<feature type="region of interest" description="Disordered" evidence="6">
    <location>
        <begin position="398"/>
        <end position="448"/>
    </location>
</feature>
<feature type="short sequence motif" description="FFD box">
    <location>
        <begin position="361"/>
        <end position="377"/>
    </location>
</feature>
<feature type="short sequence motif" description="TFG box">
    <location>
        <begin position="380"/>
        <end position="400"/>
    </location>
</feature>
<feature type="compositionally biased region" description="Polar residues" evidence="6">
    <location>
        <begin position="172"/>
        <end position="185"/>
    </location>
</feature>
<feature type="compositionally biased region" description="Polar residues" evidence="6">
    <location>
        <begin position="194"/>
        <end position="203"/>
    </location>
</feature>
<feature type="compositionally biased region" description="Polar residues" evidence="6">
    <location>
        <begin position="217"/>
        <end position="231"/>
    </location>
</feature>
<feature type="compositionally biased region" description="Basic and acidic residues" evidence="6">
    <location>
        <begin position="232"/>
        <end position="258"/>
    </location>
</feature>
<feature type="compositionally biased region" description="Basic residues" evidence="6">
    <location>
        <begin position="269"/>
        <end position="283"/>
    </location>
</feature>
<feature type="compositionally biased region" description="Basic and acidic residues" evidence="6">
    <location>
        <begin position="322"/>
        <end position="340"/>
    </location>
</feature>
<feature type="compositionally biased region" description="Gly residues" evidence="6">
    <location>
        <begin position="410"/>
        <end position="429"/>
    </location>
</feature>
<feature type="modified residue" description="N-acetylserine" evidence="3">
    <location>
        <position position="2"/>
    </location>
</feature>
<feature type="modified residue" description="Phosphoserine" evidence="3">
    <location>
        <position position="178"/>
    </location>
</feature>
<feature type="modified residue" description="Phosphoserine" evidence="3">
    <location>
        <position position="182"/>
    </location>
</feature>
<feature type="modified residue" description="Phosphoserine" evidence="3">
    <location>
        <position position="183"/>
    </location>
</feature>
<feature type="modified residue" description="Phosphoserine" evidence="3">
    <location>
        <position position="192"/>
    </location>
</feature>
<feature type="modified residue" description="Phosphothreonine" evidence="3">
    <location>
        <position position="194"/>
    </location>
</feature>
<feature type="modified residue" description="Phosphoserine" evidence="3">
    <location>
        <position position="216"/>
    </location>
</feature>
<feature type="modified residue" description="Phosphoserine" evidence="3">
    <location>
        <position position="227"/>
    </location>
</feature>
<feature type="modified residue" description="Asymmetric dimethylarginine" evidence="2">
    <location>
        <position position="401"/>
    </location>
</feature>
<comment type="function">
    <text evidence="3">Essential for formation of P-bodies, cytoplasmic structures that provide storage sites for translationally inactive mRNAs and protect them from degradation. Acts as a repressor of mRNA translation. May play a role in mitotic spindle assembly.</text>
</comment>
<comment type="subunit">
    <text evidence="1 3">Component of a ribonucleoprotein (RNP) complex (By similarity). Interacts with DDX6. Interacts with EIF4ENIF1/4E-T; promoting EIF4ENIF1/4E-T localization to P-bodies. Interacts (via FFD box) with EDC4 (By similarity).</text>
</comment>
<comment type="subcellular location">
    <subcellularLocation>
        <location evidence="3">Cytoplasm</location>
        <location evidence="3">P-body</location>
    </subcellularLocation>
    <subcellularLocation>
        <location evidence="3">Cytoplasm</location>
        <location evidence="3">Cytoskeleton</location>
        <location evidence="3">Spindle</location>
    </subcellularLocation>
    <subcellularLocation>
        <location evidence="3">Cytoplasm</location>
        <location evidence="3">Stress granule</location>
    </subcellularLocation>
</comment>
<comment type="domain">
    <text evidence="3">The LSM14 domain and the RGG repeats are required for accumulation in P-bodies, and the region containing the FDF motif is responsible for cytoplasmic retention.</text>
</comment>
<comment type="similarity">
    <text evidence="7">Belongs to the LSM14 family.</text>
</comment>
<reference key="1">
    <citation type="submission" date="2005-09" db="EMBL/GenBank/DDBJ databases">
        <authorList>
            <consortium name="NIH - Mammalian Gene Collection (MGC) project"/>
        </authorList>
    </citation>
    <scope>NUCLEOTIDE SEQUENCE [LARGE SCALE MRNA]</scope>
    <source>
        <strain>Hereford</strain>
        <tissue>Ascending colon</tissue>
    </source>
</reference>
<name>LS14A_BOVIN</name>
<gene>
    <name type="primary">LSM14A</name>
    <name type="synonym">RAP55A</name>
</gene>
<dbReference type="EMBL" id="BC105253">
    <property type="protein sequence ID" value="AAI05254.1"/>
    <property type="molecule type" value="mRNA"/>
</dbReference>
<dbReference type="RefSeq" id="NP_001029826.1">
    <property type="nucleotide sequence ID" value="NM_001034654.1"/>
</dbReference>
<dbReference type="BMRB" id="Q3MHF8"/>
<dbReference type="SMR" id="Q3MHF8"/>
<dbReference type="FunCoup" id="Q3MHF8">
    <property type="interactions" value="4736"/>
</dbReference>
<dbReference type="STRING" id="9913.ENSBTAP00000059201"/>
<dbReference type="PaxDb" id="9913-ENSBTAP00000000831"/>
<dbReference type="GeneID" id="538838"/>
<dbReference type="KEGG" id="bta:538838"/>
<dbReference type="CTD" id="26065"/>
<dbReference type="VEuPathDB" id="HostDB:ENSBTAG00000000630"/>
<dbReference type="eggNOG" id="KOG1073">
    <property type="taxonomic scope" value="Eukaryota"/>
</dbReference>
<dbReference type="InParanoid" id="Q3MHF8"/>
<dbReference type="OMA" id="WYPPPGH"/>
<dbReference type="OrthoDB" id="21539at2759"/>
<dbReference type="Proteomes" id="UP000009136">
    <property type="component" value="Chromosome 18"/>
</dbReference>
<dbReference type="Bgee" id="ENSBTAG00000000630">
    <property type="expression patterns" value="Expressed in parenchyma of mammary gland and 102 other cell types or tissues"/>
</dbReference>
<dbReference type="GO" id="GO:0005737">
    <property type="term" value="C:cytoplasm"/>
    <property type="evidence" value="ECO:0000250"/>
    <property type="project" value="UniProtKB"/>
</dbReference>
<dbReference type="GO" id="GO:0010494">
    <property type="term" value="C:cytoplasmic stress granule"/>
    <property type="evidence" value="ECO:0000250"/>
    <property type="project" value="UniProtKB"/>
</dbReference>
<dbReference type="GO" id="GO:0072686">
    <property type="term" value="C:mitotic spindle"/>
    <property type="evidence" value="ECO:0000250"/>
    <property type="project" value="UniProtKB"/>
</dbReference>
<dbReference type="GO" id="GO:0000932">
    <property type="term" value="C:P-body"/>
    <property type="evidence" value="ECO:0000250"/>
    <property type="project" value="UniProtKB"/>
</dbReference>
<dbReference type="GO" id="GO:1990904">
    <property type="term" value="C:ribonucleoprotein complex"/>
    <property type="evidence" value="ECO:0007669"/>
    <property type="project" value="UniProtKB-KW"/>
</dbReference>
<dbReference type="GO" id="GO:0003729">
    <property type="term" value="F:mRNA binding"/>
    <property type="evidence" value="ECO:0000318"/>
    <property type="project" value="GO_Central"/>
</dbReference>
<dbReference type="GO" id="GO:0090307">
    <property type="term" value="P:mitotic spindle assembly"/>
    <property type="evidence" value="ECO:0000250"/>
    <property type="project" value="UniProtKB"/>
</dbReference>
<dbReference type="GO" id="GO:0017148">
    <property type="term" value="P:negative regulation of translation"/>
    <property type="evidence" value="ECO:0000250"/>
    <property type="project" value="UniProtKB"/>
</dbReference>
<dbReference type="GO" id="GO:0033962">
    <property type="term" value="P:P-body assembly"/>
    <property type="evidence" value="ECO:0000250"/>
    <property type="project" value="UniProtKB"/>
</dbReference>
<dbReference type="GO" id="GO:0034063">
    <property type="term" value="P:stress granule assembly"/>
    <property type="evidence" value="ECO:0000318"/>
    <property type="project" value="GO_Central"/>
</dbReference>
<dbReference type="CDD" id="cd01736">
    <property type="entry name" value="LSm14_N"/>
    <property type="match status" value="1"/>
</dbReference>
<dbReference type="FunFam" id="2.30.30.100:FF:000006">
    <property type="entry name" value="Protein LSM14 homolog A isoform b"/>
    <property type="match status" value="1"/>
</dbReference>
<dbReference type="Gene3D" id="2.30.30.100">
    <property type="match status" value="1"/>
</dbReference>
<dbReference type="InterPro" id="IPR025762">
    <property type="entry name" value="DFDF"/>
</dbReference>
<dbReference type="InterPro" id="IPR019050">
    <property type="entry name" value="FDF_dom"/>
</dbReference>
<dbReference type="InterPro" id="IPR025761">
    <property type="entry name" value="FFD_box"/>
</dbReference>
<dbReference type="InterPro" id="IPR025609">
    <property type="entry name" value="Lsm14-like_N"/>
</dbReference>
<dbReference type="InterPro" id="IPR010920">
    <property type="entry name" value="LSM_dom_sf"/>
</dbReference>
<dbReference type="InterPro" id="IPR047575">
    <property type="entry name" value="Sm"/>
</dbReference>
<dbReference type="InterPro" id="IPR025768">
    <property type="entry name" value="TFG_box"/>
</dbReference>
<dbReference type="PANTHER" id="PTHR13586:SF2">
    <property type="entry name" value="PROTEIN LSM14 HOMOLOG A"/>
    <property type="match status" value="1"/>
</dbReference>
<dbReference type="PANTHER" id="PTHR13586">
    <property type="entry name" value="SCD6 PROTEIN-RELATED"/>
    <property type="match status" value="1"/>
</dbReference>
<dbReference type="Pfam" id="PF09532">
    <property type="entry name" value="FDF"/>
    <property type="match status" value="1"/>
</dbReference>
<dbReference type="Pfam" id="PF12701">
    <property type="entry name" value="LSM14"/>
    <property type="match status" value="1"/>
</dbReference>
<dbReference type="SMART" id="SM01199">
    <property type="entry name" value="FDF"/>
    <property type="match status" value="1"/>
</dbReference>
<dbReference type="SMART" id="SM01271">
    <property type="entry name" value="LSM14"/>
    <property type="match status" value="1"/>
</dbReference>
<dbReference type="SUPFAM" id="SSF50182">
    <property type="entry name" value="Sm-like ribonucleoproteins"/>
    <property type="match status" value="1"/>
</dbReference>
<dbReference type="PROSITE" id="PS51512">
    <property type="entry name" value="DFDF"/>
    <property type="match status" value="1"/>
</dbReference>
<dbReference type="PROSITE" id="PS51513">
    <property type="entry name" value="FFD"/>
    <property type="match status" value="1"/>
</dbReference>
<dbReference type="PROSITE" id="PS52002">
    <property type="entry name" value="SM"/>
    <property type="match status" value="1"/>
</dbReference>
<dbReference type="PROSITE" id="PS51536">
    <property type="entry name" value="TFG"/>
    <property type="match status" value="1"/>
</dbReference>
<accession>Q3MHF8</accession>
<proteinExistence type="evidence at transcript level"/>
<sequence length="463" mass="50636">MSGGTPYIGSKISLISKAEIRYEGILYTIDTENSTVALAKVRSFGTEDRPTDRPIPPRDEVFEYIIFRGSDIKDLTVCEPPKPQCSLPQDPAIVQSSLGSSTSSFQSVGSYGPFGRMPTYSQFSPSSLVGQQFGAVGVAGSSLTSFGTEASSSSALSQSSVVGSAFTQDSRALKTQLSQGRSSPQLDPLRKSPTMEQAVQTASAHLPAPAPVGRRSPVSTRPLPSTSQKPIENQEHRRAEVHKVSRPENEQLRNDSKRQIVPGAPSAPRRGRGGHRGGRGRFGIRRDGPMKFEKDFDFESANAQFNKEEIDREFHNKLKLKEDKLEKQEKPVNGEDKGDSGVDTQNSEGNADEEDPLGPNCYYDKTKSFFDNISCDDNRERRPTWAEERRLNAETFGIPLRPNRGRGGYRGRGGLGFRGGRGRGSGRGGAFTTPRGFRGGFRGGRGGREFADFEYRKDNKVAA</sequence>